<keyword id="KW-0221">Differentiation</keyword>
<keyword id="KW-0325">Glycoprotein</keyword>
<keyword id="KW-0472">Membrane</keyword>
<keyword id="KW-1267">Proteomics identification</keyword>
<keyword id="KW-1185">Reference proteome</keyword>
<keyword id="KW-0744">Spermatogenesis</keyword>
<keyword id="KW-0812">Transmembrane</keyword>
<keyword id="KW-1133">Transmembrane helix</keyword>
<dbReference type="EMBL" id="AK093185">
    <property type="protein sequence ID" value="BAC04087.1"/>
    <property type="status" value="ALT_INIT"/>
    <property type="molecule type" value="mRNA"/>
</dbReference>
<dbReference type="EMBL" id="AK125845">
    <property type="protein sequence ID" value="BAC86315.1"/>
    <property type="molecule type" value="mRNA"/>
</dbReference>
<dbReference type="EMBL" id="AL772337">
    <property type="status" value="NOT_ANNOTATED_CDS"/>
    <property type="molecule type" value="Genomic_DNA"/>
</dbReference>
<dbReference type="EMBL" id="BC137349">
    <property type="protein sequence ID" value="AAI37350.1"/>
    <property type="molecule type" value="mRNA"/>
</dbReference>
<dbReference type="EMBL" id="AL834438">
    <property type="protein sequence ID" value="CAD39098.1"/>
    <property type="status" value="ALT_INIT"/>
    <property type="molecule type" value="mRNA"/>
</dbReference>
<dbReference type="CCDS" id="CCDS6676.1"/>
<dbReference type="RefSeq" id="NP_849150.3">
    <property type="nucleotide sequence ID" value="NM_178828.4"/>
</dbReference>
<dbReference type="BioGRID" id="130337">
    <property type="interactions" value="3"/>
</dbReference>
<dbReference type="FunCoup" id="Q6ZUB1">
    <property type="interactions" value="45"/>
</dbReference>
<dbReference type="IntAct" id="Q6ZUB1">
    <property type="interactions" value="7"/>
</dbReference>
<dbReference type="MINT" id="Q6ZUB1"/>
<dbReference type="STRING" id="9606.ENSP00000322640"/>
<dbReference type="GlyCosmos" id="Q6ZUB1">
    <property type="glycosylation" value="4 sites, No reported glycans"/>
</dbReference>
<dbReference type="GlyGen" id="Q6ZUB1">
    <property type="glycosylation" value="4 sites"/>
</dbReference>
<dbReference type="iPTMnet" id="Q6ZUB1"/>
<dbReference type="PhosphoSitePlus" id="Q6ZUB1"/>
<dbReference type="BioMuta" id="SPATA31E1"/>
<dbReference type="DMDM" id="71152415"/>
<dbReference type="jPOST" id="Q6ZUB1"/>
<dbReference type="MassIVE" id="Q6ZUB1"/>
<dbReference type="PaxDb" id="9606-ENSP00000322640"/>
<dbReference type="PeptideAtlas" id="Q6ZUB1"/>
<dbReference type="ProteomicsDB" id="68326"/>
<dbReference type="Antibodypedia" id="13457">
    <property type="antibodies" value="42 antibodies from 9 providers"/>
</dbReference>
<dbReference type="DNASU" id="286234"/>
<dbReference type="Ensembl" id="ENST00000325643.6">
    <property type="protein sequence ID" value="ENSP00000322640.5"/>
    <property type="gene ID" value="ENSG00000177992.10"/>
</dbReference>
<dbReference type="GeneID" id="286234"/>
<dbReference type="KEGG" id="hsa:286234"/>
<dbReference type="MANE-Select" id="ENST00000325643.6">
    <property type="protein sequence ID" value="ENSP00000322640.5"/>
    <property type="RefSeq nucleotide sequence ID" value="NM_178828.5"/>
    <property type="RefSeq protein sequence ID" value="NP_849150.3"/>
</dbReference>
<dbReference type="UCSC" id="uc004app.5">
    <property type="organism name" value="human"/>
</dbReference>
<dbReference type="AGR" id="HGNC:26672"/>
<dbReference type="CTD" id="286234"/>
<dbReference type="GeneCards" id="SPATA31E1"/>
<dbReference type="HGNC" id="HGNC:26672">
    <property type="gene designation" value="SPATA31E1"/>
</dbReference>
<dbReference type="HPA" id="ENSG00000177992">
    <property type="expression patterns" value="Tissue enriched (testis)"/>
</dbReference>
<dbReference type="neXtProt" id="NX_Q6ZUB1"/>
<dbReference type="OpenTargets" id="ENSG00000177992"/>
<dbReference type="PharmGKB" id="PA134886884"/>
<dbReference type="VEuPathDB" id="HostDB:ENSG00000177992"/>
<dbReference type="eggNOG" id="ENOG502RU0E">
    <property type="taxonomic scope" value="Eukaryota"/>
</dbReference>
<dbReference type="GeneTree" id="ENSGT00950000183043"/>
<dbReference type="HOGENOM" id="CLU_005668_2_0_1"/>
<dbReference type="InParanoid" id="Q6ZUB1"/>
<dbReference type="OMA" id="EMAGNEA"/>
<dbReference type="OrthoDB" id="9526468at2759"/>
<dbReference type="PAN-GO" id="Q6ZUB1">
    <property type="GO annotations" value="0 GO annotations based on evolutionary models"/>
</dbReference>
<dbReference type="PhylomeDB" id="Q6ZUB1"/>
<dbReference type="TreeFam" id="TF338531"/>
<dbReference type="PathwayCommons" id="Q6ZUB1"/>
<dbReference type="SignaLink" id="Q6ZUB1"/>
<dbReference type="BioGRID-ORCS" id="286234">
    <property type="hits" value="9 hits in 1136 CRISPR screens"/>
</dbReference>
<dbReference type="GenomeRNAi" id="286234"/>
<dbReference type="Pharos" id="Q6ZUB1">
    <property type="development level" value="Tdark"/>
</dbReference>
<dbReference type="PRO" id="PR:Q6ZUB1"/>
<dbReference type="Proteomes" id="UP000005640">
    <property type="component" value="Chromosome 9"/>
</dbReference>
<dbReference type="RNAct" id="Q6ZUB1">
    <property type="molecule type" value="protein"/>
</dbReference>
<dbReference type="Bgee" id="ENSG00000177992">
    <property type="expression patterns" value="Expressed in left testis and 4 other cell types or tissues"/>
</dbReference>
<dbReference type="GO" id="GO:0016020">
    <property type="term" value="C:membrane"/>
    <property type="evidence" value="ECO:0007669"/>
    <property type="project" value="UniProtKB-SubCell"/>
</dbReference>
<dbReference type="GO" id="GO:0030154">
    <property type="term" value="P:cell differentiation"/>
    <property type="evidence" value="ECO:0007669"/>
    <property type="project" value="UniProtKB-KW"/>
</dbReference>
<dbReference type="GO" id="GO:0007283">
    <property type="term" value="P:spermatogenesis"/>
    <property type="evidence" value="ECO:0007669"/>
    <property type="project" value="UniProtKB-KW"/>
</dbReference>
<dbReference type="InterPro" id="IPR039509">
    <property type="entry name" value="SPATA31"/>
</dbReference>
<dbReference type="InterPro" id="IPR027970">
    <property type="entry name" value="SPATA31F3-like"/>
</dbReference>
<dbReference type="PANTHER" id="PTHR21859">
    <property type="entry name" value="ACROSOME-SPECIFIC PROTEIN"/>
    <property type="match status" value="1"/>
</dbReference>
<dbReference type="PANTHER" id="PTHR21859:SF58">
    <property type="entry name" value="SPERMATOGENESIS-ASSOCIATED PROTEIN 31E1"/>
    <property type="match status" value="1"/>
</dbReference>
<dbReference type="Pfam" id="PF15371">
    <property type="entry name" value="DUF4599"/>
    <property type="match status" value="1"/>
</dbReference>
<dbReference type="Pfam" id="PF14650">
    <property type="entry name" value="FAM75"/>
    <property type="match status" value="1"/>
</dbReference>
<feature type="chain" id="PRO_0000089716" description="Spermatogenesis-associated protein 31E1">
    <location>
        <begin position="1"/>
        <end position="1445"/>
    </location>
</feature>
<feature type="transmembrane region" description="Helical" evidence="2">
    <location>
        <begin position="64"/>
        <end position="84"/>
    </location>
</feature>
<feature type="region of interest" description="Disordered" evidence="3">
    <location>
        <begin position="90"/>
        <end position="115"/>
    </location>
</feature>
<feature type="region of interest" description="Disordered" evidence="3">
    <location>
        <begin position="169"/>
        <end position="262"/>
    </location>
</feature>
<feature type="region of interest" description="Disordered" evidence="3">
    <location>
        <begin position="411"/>
        <end position="430"/>
    </location>
</feature>
<feature type="region of interest" description="Disordered" evidence="3">
    <location>
        <begin position="460"/>
        <end position="557"/>
    </location>
</feature>
<feature type="region of interest" description="Disordered" evidence="3">
    <location>
        <begin position="592"/>
        <end position="619"/>
    </location>
</feature>
<feature type="region of interest" description="Disordered" evidence="3">
    <location>
        <begin position="637"/>
        <end position="761"/>
    </location>
</feature>
<feature type="region of interest" description="Disordered" evidence="3">
    <location>
        <begin position="894"/>
        <end position="966"/>
    </location>
</feature>
<feature type="region of interest" description="Disordered" evidence="3">
    <location>
        <begin position="1143"/>
        <end position="1242"/>
    </location>
</feature>
<feature type="region of interest" description="Disordered" evidence="3">
    <location>
        <begin position="1254"/>
        <end position="1280"/>
    </location>
</feature>
<feature type="region of interest" description="Disordered" evidence="3">
    <location>
        <begin position="1378"/>
        <end position="1445"/>
    </location>
</feature>
<feature type="compositionally biased region" description="Basic and acidic residues" evidence="3">
    <location>
        <begin position="101"/>
        <end position="110"/>
    </location>
</feature>
<feature type="compositionally biased region" description="Pro residues" evidence="3">
    <location>
        <begin position="241"/>
        <end position="260"/>
    </location>
</feature>
<feature type="compositionally biased region" description="Polar residues" evidence="3">
    <location>
        <begin position="664"/>
        <end position="681"/>
    </location>
</feature>
<feature type="compositionally biased region" description="Polar residues" evidence="3">
    <location>
        <begin position="906"/>
        <end position="915"/>
    </location>
</feature>
<feature type="compositionally biased region" description="Polar residues" evidence="3">
    <location>
        <begin position="1148"/>
        <end position="1165"/>
    </location>
</feature>
<feature type="compositionally biased region" description="Basic and acidic residues" evidence="3">
    <location>
        <begin position="1202"/>
        <end position="1217"/>
    </location>
</feature>
<feature type="glycosylation site" description="N-linked (GlcNAc...) asparagine" evidence="2">
    <location>
        <position position="408"/>
    </location>
</feature>
<feature type="glycosylation site" description="N-linked (GlcNAc...) asparagine" evidence="2">
    <location>
        <position position="819"/>
    </location>
</feature>
<feature type="glycosylation site" description="N-linked (GlcNAc...) asparagine" evidence="2">
    <location>
        <position position="906"/>
    </location>
</feature>
<feature type="glycosylation site" description="N-linked (GlcNAc...) asparagine" evidence="2">
    <location>
        <position position="1160"/>
    </location>
</feature>
<feature type="sequence variant" id="VAR_062203" description="In dbSNP:rs28510722.">
    <original>T</original>
    <variation>S</variation>
    <location>
        <position position="208"/>
    </location>
</feature>
<feature type="sequence variant" id="VAR_022858" description="In dbSNP:rs7850542." evidence="4">
    <original>T</original>
    <variation>P</variation>
    <location>
        <position position="335"/>
    </location>
</feature>
<feature type="sequence variant" id="VAR_053943" description="In dbSNP:rs34946554.">
    <original>V</original>
    <variation>M</variation>
    <location>
        <position position="409"/>
    </location>
</feature>
<feature type="sequence variant" id="VAR_053944" description="In dbSNP:rs35232271.">
    <original>K</original>
    <variation>E</variation>
    <location>
        <position position="586"/>
    </location>
</feature>
<feature type="sequence variant" id="VAR_053945" description="In dbSNP:rs36079890.">
    <original>T</original>
    <variation>M</variation>
    <location>
        <position position="671"/>
    </location>
</feature>
<feature type="sequence variant" id="VAR_022859" description="In dbSNP:rs4076795." evidence="4">
    <original>D</original>
    <variation>E</variation>
    <location>
        <position position="682"/>
    </location>
</feature>
<feature type="sequence variant" id="VAR_053946" description="In dbSNP:rs34017995.">
    <original>G</original>
    <variation>R</variation>
    <location>
        <position position="700"/>
    </location>
</feature>
<feature type="sequence variant" id="VAR_022860" description="In dbSNP:rs4076794." evidence="4">
    <original>D</original>
    <variation>E</variation>
    <location>
        <position position="704"/>
    </location>
</feature>
<feature type="sequence variant" id="VAR_053947" description="In dbSNP:rs34791830.">
    <original>A</original>
    <variation>V</variation>
    <location>
        <position position="736"/>
    </location>
</feature>
<feature type="sequence variant" id="VAR_053948" description="In dbSNP:rs34051334.">
    <original>P</original>
    <variation>L</variation>
    <location>
        <position position="924"/>
    </location>
</feature>
<feature type="sequence variant" id="VAR_053949" description="In dbSNP:rs10868670." evidence="4">
    <original>V</original>
    <variation>E</variation>
    <location>
        <position position="1019"/>
    </location>
</feature>
<feature type="sequence variant" id="VAR_022861" description="In dbSNP:rs11789780." evidence="4">
    <original>D</original>
    <variation>G</variation>
    <location>
        <position position="1202"/>
    </location>
</feature>
<feature type="sequence variant" id="VAR_022862" description="In dbSNP:rs11142017." evidence="4">
    <original>R</original>
    <variation>H</variation>
    <location>
        <position position="1350"/>
    </location>
</feature>
<feature type="sequence conflict" description="In Ref. 1; BAC86315." evidence="5" ref="1">
    <original>G</original>
    <variation>E</variation>
    <location>
        <position position="806"/>
    </location>
</feature>
<feature type="sequence conflict" description="In Ref. 1; BAC86315." evidence="5" ref="1">
    <original>N</original>
    <variation>S</variation>
    <location>
        <position position="901"/>
    </location>
</feature>
<feature type="sequence conflict" description="In Ref. 1; BAC04087." evidence="5" ref="1">
    <original>L</original>
    <variation>F</variation>
    <location>
        <position position="1170"/>
    </location>
</feature>
<name>S31E1_HUMAN</name>
<evidence type="ECO:0000250" key="1"/>
<evidence type="ECO:0000255" key="2"/>
<evidence type="ECO:0000256" key="3">
    <source>
        <dbReference type="SAM" id="MobiDB-lite"/>
    </source>
</evidence>
<evidence type="ECO:0000269" key="4">
    <source>
    </source>
</evidence>
<evidence type="ECO:0000305" key="5"/>
<gene>
    <name type="primary">SPATA31E1</name>
    <name type="synonym">C9orf79</name>
    <name type="synonym">FAM75E1</name>
</gene>
<comment type="function">
    <text evidence="1">May play a role in spermatogenesis.</text>
</comment>
<comment type="subcellular location">
    <subcellularLocation>
        <location evidence="5">Membrane</location>
        <topology evidence="5">Single-pass membrane protein</topology>
    </subcellularLocation>
</comment>
<comment type="similarity">
    <text evidence="5">Belongs to the SPATA31 family.</text>
</comment>
<comment type="sequence caution" evidence="5">
    <conflict type="erroneous initiation">
        <sequence resource="EMBL-CDS" id="BAC04087"/>
    </conflict>
</comment>
<comment type="sequence caution" evidence="5">
    <conflict type="erroneous initiation">
        <sequence resource="EMBL-CDS" id="CAD39098"/>
    </conflict>
</comment>
<sequence>MGNLVIPLGKGRAGRVESGQRIPPPAPRPSVECTGDDIALQMEKMLFPLKSPSATWLSPSSTPWMMDFILTSVCGLVLLFLLLLYVHSDPPSPPPGRKRSSREPQRERSGRSRSRKISALKACRILLRELEETRDLNYLLESHLRKLAGEGSSHLPLGGDPLGDVCKPVPAKAHQPHGKCMQDPSPASLSPPAPPAPLASTLSPGPMTFSEPFGPHSTLSASGPPEPLLPLKCPATQPHVVFPPSPQPHGPLASSPPPPDSSLAGLQCGSTTCPVPQSSPLHNQVLPPPTRVISGLGCSSDPIWDLYCWREAATTWGLSTYSHGKSQPRHLPDHTSEASFWGDPTPKHMEVGGCTFIHPDVQKLLETLIAKRALMKMWQEKERKRADHPHMTSLGKEWDITTLNPFWNVSTQPQQLPRPQQVSDATTVGNHLQQKRSQLFWDLPSLNSESLATTVWVSRNPSSQNAHSVPLDKASTSLPGEPEVEASSQLSQAPPQPHHMAQPQHFTPAWPQSQPPPLAEIQTQAHLSPPVPSLGCSSPPQIRGCGASYPTSQERTQSVIPTGKEYLEWPLKKRPKWKRVLPSLLKKSQAVLSQPTAHLPQERPASWSPKSAPILPGVVTSPELPEHWWQGRNAIHQEQSCGPPSRLQASGDLLQPDGEFPGRPQSQAEDTQQALLPSQPSDFAGKGRKDVQKTGFRSSGRFSDKGCLGSKLGPDPSRDQGSGRTSVKALDEDKEAEGDLRRSWKYQSVSSTPRDPDKEHLENKLQIHLARKVGEIKEGWIPMPVRRSWLMAKCAVPKSDTHRKPGKLASWRGGKAHVNTSQELSFLHPCTQQILEVHLVRFCVRHSWGTDLQSLEPINVWSGEAQAPPFPQSTFTPWASWVSRVESVPKVPIFLGKRPQNGPGDNRTTSKSVPTVSGPLAAPPPEQEGVQRPPRGSQSADTHGRSEAFPTGHKGRGCSQPPTCSLVGRTWQSRTVLESGKPKPRLEGSMGSEMAGNEAWLESESMSPGDPCSSRALQVLSIGSQWARAEDALQALKVGEKPPTWEVTLGASVRASSGSVQEDLRSTGALGTTGNPSASSVCVAQDPEQLHLKAQVVSEIALIVQVDSEEQLPGRAPGILLQDGATGLCLPGRHMDMLTAADRLPTQAPLSTSQSVSGKNMTASQGPCALLWKGGDSPGQQEPGSPKAKAPQKSQKTLGCADKGEAHRRPRTGEQGHRSKGPRTSEASGRSHPAQAREIGDKQERKYNQLQLEKGQTPPESHFQRKISHHPQGLHPRKGGTRWEDVLQKGKPGADAFQSWGSGPPRQFMDCMADKAWTISRVVGQILVDKLGLQWGRGPSEVNRHKGDFRAQENVPSCCHRGHCHQERSREMRALACSPKATPKGHHCPVKNRGIRDRDSSWAPPPREPVSPAGPHHHRPRMASTSGGPHPQLQELMSAQRCLAS</sequence>
<organism>
    <name type="scientific">Homo sapiens</name>
    <name type="common">Human</name>
    <dbReference type="NCBI Taxonomy" id="9606"/>
    <lineage>
        <taxon>Eukaryota</taxon>
        <taxon>Metazoa</taxon>
        <taxon>Chordata</taxon>
        <taxon>Craniata</taxon>
        <taxon>Vertebrata</taxon>
        <taxon>Euteleostomi</taxon>
        <taxon>Mammalia</taxon>
        <taxon>Eutheria</taxon>
        <taxon>Euarchontoglires</taxon>
        <taxon>Primates</taxon>
        <taxon>Haplorrhini</taxon>
        <taxon>Catarrhini</taxon>
        <taxon>Hominidae</taxon>
        <taxon>Homo</taxon>
    </lineage>
</organism>
<protein>
    <recommendedName>
        <fullName>Spermatogenesis-associated protein 31E1</fullName>
    </recommendedName>
    <alternativeName>
        <fullName>Protein FAM75E1</fullName>
    </alternativeName>
</protein>
<proteinExistence type="evidence at protein level"/>
<reference key="1">
    <citation type="journal article" date="2004" name="Nat. Genet.">
        <title>Complete sequencing and characterization of 21,243 full-length human cDNAs.</title>
        <authorList>
            <person name="Ota T."/>
            <person name="Suzuki Y."/>
            <person name="Nishikawa T."/>
            <person name="Otsuki T."/>
            <person name="Sugiyama T."/>
            <person name="Irie R."/>
            <person name="Wakamatsu A."/>
            <person name="Hayashi K."/>
            <person name="Sato H."/>
            <person name="Nagai K."/>
            <person name="Kimura K."/>
            <person name="Makita H."/>
            <person name="Sekine M."/>
            <person name="Obayashi M."/>
            <person name="Nishi T."/>
            <person name="Shibahara T."/>
            <person name="Tanaka T."/>
            <person name="Ishii S."/>
            <person name="Yamamoto J."/>
            <person name="Saito K."/>
            <person name="Kawai Y."/>
            <person name="Isono Y."/>
            <person name="Nakamura Y."/>
            <person name="Nagahari K."/>
            <person name="Murakami K."/>
            <person name="Yasuda T."/>
            <person name="Iwayanagi T."/>
            <person name="Wagatsuma M."/>
            <person name="Shiratori A."/>
            <person name="Sudo H."/>
            <person name="Hosoiri T."/>
            <person name="Kaku Y."/>
            <person name="Kodaira H."/>
            <person name="Kondo H."/>
            <person name="Sugawara M."/>
            <person name="Takahashi M."/>
            <person name="Kanda K."/>
            <person name="Yokoi T."/>
            <person name="Furuya T."/>
            <person name="Kikkawa E."/>
            <person name="Omura Y."/>
            <person name="Abe K."/>
            <person name="Kamihara K."/>
            <person name="Katsuta N."/>
            <person name="Sato K."/>
            <person name="Tanikawa M."/>
            <person name="Yamazaki M."/>
            <person name="Ninomiya K."/>
            <person name="Ishibashi T."/>
            <person name="Yamashita H."/>
            <person name="Murakawa K."/>
            <person name="Fujimori K."/>
            <person name="Tanai H."/>
            <person name="Kimata M."/>
            <person name="Watanabe M."/>
            <person name="Hiraoka S."/>
            <person name="Chiba Y."/>
            <person name="Ishida S."/>
            <person name="Ono Y."/>
            <person name="Takiguchi S."/>
            <person name="Watanabe S."/>
            <person name="Yosida M."/>
            <person name="Hotuta T."/>
            <person name="Kusano J."/>
            <person name="Kanehori K."/>
            <person name="Takahashi-Fujii A."/>
            <person name="Hara H."/>
            <person name="Tanase T.-O."/>
            <person name="Nomura Y."/>
            <person name="Togiya S."/>
            <person name="Komai F."/>
            <person name="Hara R."/>
            <person name="Takeuchi K."/>
            <person name="Arita M."/>
            <person name="Imose N."/>
            <person name="Musashino K."/>
            <person name="Yuuki H."/>
            <person name="Oshima A."/>
            <person name="Sasaki N."/>
            <person name="Aotsuka S."/>
            <person name="Yoshikawa Y."/>
            <person name="Matsunawa H."/>
            <person name="Ichihara T."/>
            <person name="Shiohata N."/>
            <person name="Sano S."/>
            <person name="Moriya S."/>
            <person name="Momiyama H."/>
            <person name="Satoh N."/>
            <person name="Takami S."/>
            <person name="Terashima Y."/>
            <person name="Suzuki O."/>
            <person name="Nakagawa S."/>
            <person name="Senoh A."/>
            <person name="Mizoguchi H."/>
            <person name="Goto Y."/>
            <person name="Shimizu F."/>
            <person name="Wakebe H."/>
            <person name="Hishigaki H."/>
            <person name="Watanabe T."/>
            <person name="Sugiyama A."/>
            <person name="Takemoto M."/>
            <person name="Kawakami B."/>
            <person name="Yamazaki M."/>
            <person name="Watanabe K."/>
            <person name="Kumagai A."/>
            <person name="Itakura S."/>
            <person name="Fukuzumi Y."/>
            <person name="Fujimori Y."/>
            <person name="Komiyama M."/>
            <person name="Tashiro H."/>
            <person name="Tanigami A."/>
            <person name="Fujiwara T."/>
            <person name="Ono T."/>
            <person name="Yamada K."/>
            <person name="Fujii Y."/>
            <person name="Ozaki K."/>
            <person name="Hirao M."/>
            <person name="Ohmori Y."/>
            <person name="Kawabata A."/>
            <person name="Hikiji T."/>
            <person name="Kobatake N."/>
            <person name="Inagaki H."/>
            <person name="Ikema Y."/>
            <person name="Okamoto S."/>
            <person name="Okitani R."/>
            <person name="Kawakami T."/>
            <person name="Noguchi S."/>
            <person name="Itoh T."/>
            <person name="Shigeta K."/>
            <person name="Senba T."/>
            <person name="Matsumura K."/>
            <person name="Nakajima Y."/>
            <person name="Mizuno T."/>
            <person name="Morinaga M."/>
            <person name="Sasaki M."/>
            <person name="Togashi T."/>
            <person name="Oyama M."/>
            <person name="Hata H."/>
            <person name="Watanabe M."/>
            <person name="Komatsu T."/>
            <person name="Mizushima-Sugano J."/>
            <person name="Satoh T."/>
            <person name="Shirai Y."/>
            <person name="Takahashi Y."/>
            <person name="Nakagawa K."/>
            <person name="Okumura K."/>
            <person name="Nagase T."/>
            <person name="Nomura N."/>
            <person name="Kikuchi H."/>
            <person name="Masuho Y."/>
            <person name="Yamashita R."/>
            <person name="Nakai K."/>
            <person name="Yada T."/>
            <person name="Nakamura Y."/>
            <person name="Ohara O."/>
            <person name="Isogai T."/>
            <person name="Sugano S."/>
        </authorList>
    </citation>
    <scope>NUCLEOTIDE SEQUENCE [LARGE SCALE MRNA]</scope>
    <scope>VARIANTS PRO-335; GLU-682; GLU-704; GLU-1019; GLY-1202 AND HIS-1350</scope>
    <source>
        <tissue>Testis</tissue>
    </source>
</reference>
<reference key="2">
    <citation type="journal article" date="2004" name="Nature">
        <title>DNA sequence and analysis of human chromosome 9.</title>
        <authorList>
            <person name="Humphray S.J."/>
            <person name="Oliver K."/>
            <person name="Hunt A.R."/>
            <person name="Plumb R.W."/>
            <person name="Loveland J.E."/>
            <person name="Howe K.L."/>
            <person name="Andrews T.D."/>
            <person name="Searle S."/>
            <person name="Hunt S.E."/>
            <person name="Scott C.E."/>
            <person name="Jones M.C."/>
            <person name="Ainscough R."/>
            <person name="Almeida J.P."/>
            <person name="Ambrose K.D."/>
            <person name="Ashwell R.I.S."/>
            <person name="Babbage A.K."/>
            <person name="Babbage S."/>
            <person name="Bagguley C.L."/>
            <person name="Bailey J."/>
            <person name="Banerjee R."/>
            <person name="Barker D.J."/>
            <person name="Barlow K.F."/>
            <person name="Bates K."/>
            <person name="Beasley H."/>
            <person name="Beasley O."/>
            <person name="Bird C.P."/>
            <person name="Bray-Allen S."/>
            <person name="Brown A.J."/>
            <person name="Brown J.Y."/>
            <person name="Burford D."/>
            <person name="Burrill W."/>
            <person name="Burton J."/>
            <person name="Carder C."/>
            <person name="Carter N.P."/>
            <person name="Chapman J.C."/>
            <person name="Chen Y."/>
            <person name="Clarke G."/>
            <person name="Clark S.Y."/>
            <person name="Clee C.M."/>
            <person name="Clegg S."/>
            <person name="Collier R.E."/>
            <person name="Corby N."/>
            <person name="Crosier M."/>
            <person name="Cummings A.T."/>
            <person name="Davies J."/>
            <person name="Dhami P."/>
            <person name="Dunn M."/>
            <person name="Dutta I."/>
            <person name="Dyer L.W."/>
            <person name="Earthrowl M.E."/>
            <person name="Faulkner L."/>
            <person name="Fleming C.J."/>
            <person name="Frankish A."/>
            <person name="Frankland J.A."/>
            <person name="French L."/>
            <person name="Fricker D.G."/>
            <person name="Garner P."/>
            <person name="Garnett J."/>
            <person name="Ghori J."/>
            <person name="Gilbert J.G.R."/>
            <person name="Glison C."/>
            <person name="Grafham D.V."/>
            <person name="Gribble S."/>
            <person name="Griffiths C."/>
            <person name="Griffiths-Jones S."/>
            <person name="Grocock R."/>
            <person name="Guy J."/>
            <person name="Hall R.E."/>
            <person name="Hammond S."/>
            <person name="Harley J.L."/>
            <person name="Harrison E.S.I."/>
            <person name="Hart E.A."/>
            <person name="Heath P.D."/>
            <person name="Henderson C.D."/>
            <person name="Hopkins B.L."/>
            <person name="Howard P.J."/>
            <person name="Howden P.J."/>
            <person name="Huckle E."/>
            <person name="Johnson C."/>
            <person name="Johnson D."/>
            <person name="Joy A.A."/>
            <person name="Kay M."/>
            <person name="Keenan S."/>
            <person name="Kershaw J.K."/>
            <person name="Kimberley A.M."/>
            <person name="King A."/>
            <person name="Knights A."/>
            <person name="Laird G.K."/>
            <person name="Langford C."/>
            <person name="Lawlor S."/>
            <person name="Leongamornlert D.A."/>
            <person name="Leversha M."/>
            <person name="Lloyd C."/>
            <person name="Lloyd D.M."/>
            <person name="Lovell J."/>
            <person name="Martin S."/>
            <person name="Mashreghi-Mohammadi M."/>
            <person name="Matthews L."/>
            <person name="McLaren S."/>
            <person name="McLay K.E."/>
            <person name="McMurray A."/>
            <person name="Milne S."/>
            <person name="Nickerson T."/>
            <person name="Nisbett J."/>
            <person name="Nordsiek G."/>
            <person name="Pearce A.V."/>
            <person name="Peck A.I."/>
            <person name="Porter K.M."/>
            <person name="Pandian R."/>
            <person name="Pelan S."/>
            <person name="Phillimore B."/>
            <person name="Povey S."/>
            <person name="Ramsey Y."/>
            <person name="Rand V."/>
            <person name="Scharfe M."/>
            <person name="Sehra H.K."/>
            <person name="Shownkeen R."/>
            <person name="Sims S.K."/>
            <person name="Skuce C.D."/>
            <person name="Smith M."/>
            <person name="Steward C.A."/>
            <person name="Swarbreck D."/>
            <person name="Sycamore N."/>
            <person name="Tester J."/>
            <person name="Thorpe A."/>
            <person name="Tracey A."/>
            <person name="Tromans A."/>
            <person name="Thomas D.W."/>
            <person name="Wall M."/>
            <person name="Wallis J.M."/>
            <person name="West A.P."/>
            <person name="Whitehead S.L."/>
            <person name="Willey D.L."/>
            <person name="Williams S.A."/>
            <person name="Wilming L."/>
            <person name="Wray P.W."/>
            <person name="Young L."/>
            <person name="Ashurst J.L."/>
            <person name="Coulson A."/>
            <person name="Blocker H."/>
            <person name="Durbin R.M."/>
            <person name="Sulston J.E."/>
            <person name="Hubbard T."/>
            <person name="Jackson M.J."/>
            <person name="Bentley D.R."/>
            <person name="Beck S."/>
            <person name="Rogers J."/>
            <person name="Dunham I."/>
        </authorList>
    </citation>
    <scope>NUCLEOTIDE SEQUENCE [LARGE SCALE GENOMIC DNA]</scope>
</reference>
<reference key="3">
    <citation type="journal article" date="2004" name="Genome Res.">
        <title>The status, quality, and expansion of the NIH full-length cDNA project: the Mammalian Gene Collection (MGC).</title>
        <authorList>
            <consortium name="The MGC Project Team"/>
        </authorList>
    </citation>
    <scope>NUCLEOTIDE SEQUENCE [LARGE SCALE MRNA]</scope>
</reference>
<reference key="4">
    <citation type="journal article" date="2007" name="BMC Genomics">
        <title>The full-ORF clone resource of the German cDNA consortium.</title>
        <authorList>
            <person name="Bechtel S."/>
            <person name="Rosenfelder H."/>
            <person name="Duda A."/>
            <person name="Schmidt C.P."/>
            <person name="Ernst U."/>
            <person name="Wellenreuther R."/>
            <person name="Mehrle A."/>
            <person name="Schuster C."/>
            <person name="Bahr A."/>
            <person name="Bloecker H."/>
            <person name="Heubner D."/>
            <person name="Hoerlein A."/>
            <person name="Michel G."/>
            <person name="Wedler H."/>
            <person name="Koehrer K."/>
            <person name="Ottenwaelder B."/>
            <person name="Poustka A."/>
            <person name="Wiemann S."/>
            <person name="Schupp I."/>
        </authorList>
    </citation>
    <scope>NUCLEOTIDE SEQUENCE [LARGE SCALE MRNA] OF 290-1445</scope>
    <source>
        <tissue>Testis</tissue>
    </source>
</reference>
<accession>Q6ZUB1</accession>
<accession>B2RPB1</accession>
<accession>Q5SQC9</accession>
<accession>Q8NA41</accession>
<accession>Q8ND27</accession>